<protein>
    <recommendedName>
        <fullName evidence="1">Hydroxyacylglutathione hydrolase</fullName>
        <ecNumber evidence="1">3.1.2.6</ecNumber>
    </recommendedName>
    <alternativeName>
        <fullName evidence="1">Glyoxalase II</fullName>
        <shortName evidence="1">Glx II</shortName>
    </alternativeName>
</protein>
<gene>
    <name evidence="1" type="primary">gloB</name>
    <name type="ordered locus">BMEI0129</name>
</gene>
<reference key="1">
    <citation type="journal article" date="2002" name="Proc. Natl. Acad. Sci. U.S.A.">
        <title>The genome sequence of the facultative intracellular pathogen Brucella melitensis.</title>
        <authorList>
            <person name="DelVecchio V.G."/>
            <person name="Kapatral V."/>
            <person name="Redkar R.J."/>
            <person name="Patra G."/>
            <person name="Mujer C."/>
            <person name="Los T."/>
            <person name="Ivanova N."/>
            <person name="Anderson I."/>
            <person name="Bhattacharyya A."/>
            <person name="Lykidis A."/>
            <person name="Reznik G."/>
            <person name="Jablonski L."/>
            <person name="Larsen N."/>
            <person name="D'Souza M."/>
            <person name="Bernal A."/>
            <person name="Mazur M."/>
            <person name="Goltsman E."/>
            <person name="Selkov E."/>
            <person name="Elzer P.H."/>
            <person name="Hagius S."/>
            <person name="O'Callaghan D."/>
            <person name="Letesson J.-J."/>
            <person name="Haselkorn R."/>
            <person name="Kyrpides N.C."/>
            <person name="Overbeek R."/>
        </authorList>
    </citation>
    <scope>NUCLEOTIDE SEQUENCE [LARGE SCALE GENOMIC DNA]</scope>
    <source>
        <strain>ATCC 23456 / CCUG 17765 / NCTC 10094 / 16M</strain>
    </source>
</reference>
<name>GLO2_BRUME</name>
<accession>Q8YJF4</accession>
<dbReference type="EC" id="3.1.2.6" evidence="1"/>
<dbReference type="EMBL" id="AE008917">
    <property type="protein sequence ID" value="AAL51311.1"/>
    <property type="molecule type" value="Genomic_DNA"/>
</dbReference>
<dbReference type="PIR" id="AD3268">
    <property type="entry name" value="AD3268"/>
</dbReference>
<dbReference type="SMR" id="Q8YJF4"/>
<dbReference type="KEGG" id="bme:BMEI0129"/>
<dbReference type="eggNOG" id="COG0491">
    <property type="taxonomic scope" value="Bacteria"/>
</dbReference>
<dbReference type="UniPathway" id="UPA00619">
    <property type="reaction ID" value="UER00676"/>
</dbReference>
<dbReference type="Proteomes" id="UP000000419">
    <property type="component" value="Chromosome I"/>
</dbReference>
<dbReference type="GO" id="GO:0004416">
    <property type="term" value="F:hydroxyacylglutathione hydrolase activity"/>
    <property type="evidence" value="ECO:0007669"/>
    <property type="project" value="UniProtKB-UniRule"/>
</dbReference>
<dbReference type="GO" id="GO:0046872">
    <property type="term" value="F:metal ion binding"/>
    <property type="evidence" value="ECO:0007669"/>
    <property type="project" value="UniProtKB-KW"/>
</dbReference>
<dbReference type="GO" id="GO:0019243">
    <property type="term" value="P:methylglyoxal catabolic process to D-lactate via S-lactoyl-glutathione"/>
    <property type="evidence" value="ECO:0007669"/>
    <property type="project" value="InterPro"/>
</dbReference>
<dbReference type="CDD" id="cd07723">
    <property type="entry name" value="hydroxyacylglutathione_hydrolase_MBL-fold"/>
    <property type="match status" value="1"/>
</dbReference>
<dbReference type="Gene3D" id="3.60.15.10">
    <property type="entry name" value="Ribonuclease Z/Hydroxyacylglutathione hydrolase-like"/>
    <property type="match status" value="1"/>
</dbReference>
<dbReference type="HAMAP" id="MF_01374">
    <property type="entry name" value="Glyoxalase_2"/>
    <property type="match status" value="1"/>
</dbReference>
<dbReference type="InterPro" id="IPR035680">
    <property type="entry name" value="Clx_II_MBL"/>
</dbReference>
<dbReference type="InterPro" id="IPR050110">
    <property type="entry name" value="Glyoxalase_II_hydrolase"/>
</dbReference>
<dbReference type="InterPro" id="IPR032282">
    <property type="entry name" value="HAGH_C"/>
</dbReference>
<dbReference type="InterPro" id="IPR017782">
    <property type="entry name" value="Hydroxyacylglutathione_Hdrlase"/>
</dbReference>
<dbReference type="InterPro" id="IPR001279">
    <property type="entry name" value="Metallo-B-lactamas"/>
</dbReference>
<dbReference type="InterPro" id="IPR036866">
    <property type="entry name" value="RibonucZ/Hydroxyglut_hydro"/>
</dbReference>
<dbReference type="NCBIfam" id="TIGR03413">
    <property type="entry name" value="GSH_gloB"/>
    <property type="match status" value="1"/>
</dbReference>
<dbReference type="PANTHER" id="PTHR43705">
    <property type="entry name" value="HYDROXYACYLGLUTATHIONE HYDROLASE"/>
    <property type="match status" value="1"/>
</dbReference>
<dbReference type="PANTHER" id="PTHR43705:SF1">
    <property type="entry name" value="HYDROXYACYLGLUTATHIONE HYDROLASE GLOB"/>
    <property type="match status" value="1"/>
</dbReference>
<dbReference type="Pfam" id="PF16123">
    <property type="entry name" value="HAGH_C"/>
    <property type="match status" value="1"/>
</dbReference>
<dbReference type="Pfam" id="PF00753">
    <property type="entry name" value="Lactamase_B"/>
    <property type="match status" value="1"/>
</dbReference>
<dbReference type="PIRSF" id="PIRSF005457">
    <property type="entry name" value="Glx"/>
    <property type="match status" value="1"/>
</dbReference>
<dbReference type="SMART" id="SM00849">
    <property type="entry name" value="Lactamase_B"/>
    <property type="match status" value="1"/>
</dbReference>
<dbReference type="SUPFAM" id="SSF56281">
    <property type="entry name" value="Metallo-hydrolase/oxidoreductase"/>
    <property type="match status" value="1"/>
</dbReference>
<organism>
    <name type="scientific">Brucella melitensis biotype 1 (strain ATCC 23456 / CCUG 17765 / NCTC 10094 / 16M)</name>
    <dbReference type="NCBI Taxonomy" id="224914"/>
    <lineage>
        <taxon>Bacteria</taxon>
        <taxon>Pseudomonadati</taxon>
        <taxon>Pseudomonadota</taxon>
        <taxon>Alphaproteobacteria</taxon>
        <taxon>Hyphomicrobiales</taxon>
        <taxon>Brucellaceae</taxon>
        <taxon>Brucella/Ochrobactrum group</taxon>
        <taxon>Brucella</taxon>
    </lineage>
</organism>
<keyword id="KW-0378">Hydrolase</keyword>
<keyword id="KW-0479">Metal-binding</keyword>
<keyword id="KW-0862">Zinc</keyword>
<proteinExistence type="inferred from homology"/>
<feature type="chain" id="PRO_0000309633" description="Hydroxyacylglutathione hydrolase">
    <location>
        <begin position="1"/>
        <end position="257"/>
    </location>
</feature>
<feature type="binding site" evidence="1">
    <location>
        <position position="58"/>
    </location>
    <ligand>
        <name>Zn(2+)</name>
        <dbReference type="ChEBI" id="CHEBI:29105"/>
        <label>1</label>
    </ligand>
</feature>
<feature type="binding site" evidence="1">
    <location>
        <position position="60"/>
    </location>
    <ligand>
        <name>Zn(2+)</name>
        <dbReference type="ChEBI" id="CHEBI:29105"/>
        <label>1</label>
    </ligand>
</feature>
<feature type="binding site" evidence="1">
    <location>
        <position position="62"/>
    </location>
    <ligand>
        <name>Zn(2+)</name>
        <dbReference type="ChEBI" id="CHEBI:29105"/>
        <label>2</label>
    </ligand>
</feature>
<feature type="binding site" evidence="1">
    <location>
        <position position="63"/>
    </location>
    <ligand>
        <name>Zn(2+)</name>
        <dbReference type="ChEBI" id="CHEBI:29105"/>
        <label>2</label>
    </ligand>
</feature>
<feature type="binding site" evidence="1">
    <location>
        <position position="116"/>
    </location>
    <ligand>
        <name>Zn(2+)</name>
        <dbReference type="ChEBI" id="CHEBI:29105"/>
        <label>1</label>
    </ligand>
</feature>
<feature type="binding site" evidence="1">
    <location>
        <position position="135"/>
    </location>
    <ligand>
        <name>Zn(2+)</name>
        <dbReference type="ChEBI" id="CHEBI:29105"/>
        <label>1</label>
    </ligand>
</feature>
<feature type="binding site" evidence="1">
    <location>
        <position position="135"/>
    </location>
    <ligand>
        <name>Zn(2+)</name>
        <dbReference type="ChEBI" id="CHEBI:29105"/>
        <label>2</label>
    </ligand>
</feature>
<feature type="binding site" evidence="1">
    <location>
        <position position="173"/>
    </location>
    <ligand>
        <name>Zn(2+)</name>
        <dbReference type="ChEBI" id="CHEBI:29105"/>
        <label>2</label>
    </ligand>
</feature>
<comment type="function">
    <text evidence="1">Thiolesterase that catalyzes the hydrolysis of S-D-lactoyl-glutathione to form glutathione and D-lactic acid.</text>
</comment>
<comment type="catalytic activity">
    <reaction evidence="1">
        <text>an S-(2-hydroxyacyl)glutathione + H2O = a 2-hydroxy carboxylate + glutathione + H(+)</text>
        <dbReference type="Rhea" id="RHEA:21864"/>
        <dbReference type="ChEBI" id="CHEBI:15377"/>
        <dbReference type="ChEBI" id="CHEBI:15378"/>
        <dbReference type="ChEBI" id="CHEBI:57925"/>
        <dbReference type="ChEBI" id="CHEBI:58896"/>
        <dbReference type="ChEBI" id="CHEBI:71261"/>
        <dbReference type="EC" id="3.1.2.6"/>
    </reaction>
</comment>
<comment type="cofactor">
    <cofactor evidence="1">
        <name>Zn(2+)</name>
        <dbReference type="ChEBI" id="CHEBI:29105"/>
    </cofactor>
    <text evidence="1">Binds 2 Zn(2+) ions per subunit.</text>
</comment>
<comment type="pathway">
    <text evidence="1">Secondary metabolite metabolism; methylglyoxal degradation; (R)-lactate from methylglyoxal: step 2/2.</text>
</comment>
<comment type="subunit">
    <text evidence="1">Monomer.</text>
</comment>
<comment type="similarity">
    <text evidence="1">Belongs to the metallo-beta-lactamase superfamily. Glyoxalase II family.</text>
</comment>
<sequence length="257" mass="28716">MEQRLEIEQFICRSDNYGVLIHDPESALTATIDAPDAYAIEAALERRGWTLDFIFTTHHHLDHVEGNEPLKEKFGVSIIGPEAEKAKIPGIDRTVKGGDEFTFGLFKVKVISTPGHTAGGISYYLPDAKVVFTGDTLFALGCGRLFEGTPATMFHSLEKLVALPGDTALYCGHEYTQNNARFALTIDPDNSALKERAKEIARLRAHERMTLPSTIALEMATNPFLRWHDRTIRARLGLQDAPDEAVFAEIRKRKDMF</sequence>
<evidence type="ECO:0000255" key="1">
    <source>
        <dbReference type="HAMAP-Rule" id="MF_01374"/>
    </source>
</evidence>